<gene>
    <name evidence="1" type="primary">serC</name>
    <name type="ordered locus">Sden_1947</name>
</gene>
<organism>
    <name type="scientific">Shewanella denitrificans (strain OS217 / ATCC BAA-1090 / DSM 15013)</name>
    <dbReference type="NCBI Taxonomy" id="318161"/>
    <lineage>
        <taxon>Bacteria</taxon>
        <taxon>Pseudomonadati</taxon>
        <taxon>Pseudomonadota</taxon>
        <taxon>Gammaproteobacteria</taxon>
        <taxon>Alteromonadales</taxon>
        <taxon>Shewanellaceae</taxon>
        <taxon>Shewanella</taxon>
    </lineage>
</organism>
<sequence length="363" mass="40147">MSRIYNFCAGPAMLPAAVMQKAQQELLDWNGLGVSVMEISHRSKEFIALAEQAEVNLRQLMNIPNHYHVLFMHGGGRSQFSNVVNNFLGDHGRALYLVSGQWSQSAVEEAQKLAGEAQIDALNIVTKADGLNQVTLPDLHSIKKDYRYVHYCTNETVDGIEIFDELDSPWPIVADLSSTIMSREIDVSRYGLIYAGAQKNIGPSGLSIVIVRDDMLKLASLPQSSVMDYRIAAENGSMFNTPPTFAWYLAAEVFNWLKGLGGVEVIAQVNQQKAQLLYACIDDNSFYRNGVAKQNRSQMNVTFQLADDSLDSRFLAEAERAGLVALKGHRIVGGMRASLYNAMPLEGVQALVTFMSEFATKHS</sequence>
<dbReference type="EC" id="2.6.1.52" evidence="1"/>
<dbReference type="EMBL" id="CP000302">
    <property type="protein sequence ID" value="ABE55230.1"/>
    <property type="molecule type" value="Genomic_DNA"/>
</dbReference>
<dbReference type="RefSeq" id="WP_011496386.1">
    <property type="nucleotide sequence ID" value="NC_007954.1"/>
</dbReference>
<dbReference type="SMR" id="Q12MU6"/>
<dbReference type="STRING" id="318161.Sden_1947"/>
<dbReference type="KEGG" id="sdn:Sden_1947"/>
<dbReference type="eggNOG" id="COG1932">
    <property type="taxonomic scope" value="Bacteria"/>
</dbReference>
<dbReference type="HOGENOM" id="CLU_034866_0_2_6"/>
<dbReference type="OrthoDB" id="9809412at2"/>
<dbReference type="UniPathway" id="UPA00135">
    <property type="reaction ID" value="UER00197"/>
</dbReference>
<dbReference type="UniPathway" id="UPA00244">
    <property type="reaction ID" value="UER00311"/>
</dbReference>
<dbReference type="Proteomes" id="UP000001982">
    <property type="component" value="Chromosome"/>
</dbReference>
<dbReference type="GO" id="GO:0005737">
    <property type="term" value="C:cytoplasm"/>
    <property type="evidence" value="ECO:0007669"/>
    <property type="project" value="UniProtKB-SubCell"/>
</dbReference>
<dbReference type="GO" id="GO:0004648">
    <property type="term" value="F:O-phospho-L-serine:2-oxoglutarate aminotransferase activity"/>
    <property type="evidence" value="ECO:0007669"/>
    <property type="project" value="UniProtKB-UniRule"/>
</dbReference>
<dbReference type="GO" id="GO:0030170">
    <property type="term" value="F:pyridoxal phosphate binding"/>
    <property type="evidence" value="ECO:0007669"/>
    <property type="project" value="UniProtKB-UniRule"/>
</dbReference>
<dbReference type="GO" id="GO:0006564">
    <property type="term" value="P:L-serine biosynthetic process"/>
    <property type="evidence" value="ECO:0007669"/>
    <property type="project" value="UniProtKB-UniRule"/>
</dbReference>
<dbReference type="GO" id="GO:0008615">
    <property type="term" value="P:pyridoxine biosynthetic process"/>
    <property type="evidence" value="ECO:0007669"/>
    <property type="project" value="UniProtKB-UniRule"/>
</dbReference>
<dbReference type="FunFam" id="3.40.640.10:FF:000010">
    <property type="entry name" value="Phosphoserine aminotransferase"/>
    <property type="match status" value="1"/>
</dbReference>
<dbReference type="FunFam" id="3.90.1150.10:FF:000006">
    <property type="entry name" value="Phosphoserine aminotransferase"/>
    <property type="match status" value="1"/>
</dbReference>
<dbReference type="Gene3D" id="3.90.1150.10">
    <property type="entry name" value="Aspartate Aminotransferase, domain 1"/>
    <property type="match status" value="1"/>
</dbReference>
<dbReference type="Gene3D" id="3.40.640.10">
    <property type="entry name" value="Type I PLP-dependent aspartate aminotransferase-like (Major domain)"/>
    <property type="match status" value="1"/>
</dbReference>
<dbReference type="HAMAP" id="MF_00160">
    <property type="entry name" value="SerC_aminotrans_5"/>
    <property type="match status" value="1"/>
</dbReference>
<dbReference type="InterPro" id="IPR000192">
    <property type="entry name" value="Aminotrans_V_dom"/>
</dbReference>
<dbReference type="InterPro" id="IPR020578">
    <property type="entry name" value="Aminotrans_V_PyrdxlP_BS"/>
</dbReference>
<dbReference type="InterPro" id="IPR022278">
    <property type="entry name" value="Pser_aminoTfrase"/>
</dbReference>
<dbReference type="InterPro" id="IPR015424">
    <property type="entry name" value="PyrdxlP-dep_Trfase"/>
</dbReference>
<dbReference type="InterPro" id="IPR015421">
    <property type="entry name" value="PyrdxlP-dep_Trfase_major"/>
</dbReference>
<dbReference type="InterPro" id="IPR015422">
    <property type="entry name" value="PyrdxlP-dep_Trfase_small"/>
</dbReference>
<dbReference type="NCBIfam" id="NF003764">
    <property type="entry name" value="PRK05355.1"/>
    <property type="match status" value="1"/>
</dbReference>
<dbReference type="NCBIfam" id="TIGR01364">
    <property type="entry name" value="serC_1"/>
    <property type="match status" value="1"/>
</dbReference>
<dbReference type="PANTHER" id="PTHR43247">
    <property type="entry name" value="PHOSPHOSERINE AMINOTRANSFERASE"/>
    <property type="match status" value="1"/>
</dbReference>
<dbReference type="PANTHER" id="PTHR43247:SF1">
    <property type="entry name" value="PHOSPHOSERINE AMINOTRANSFERASE"/>
    <property type="match status" value="1"/>
</dbReference>
<dbReference type="Pfam" id="PF00266">
    <property type="entry name" value="Aminotran_5"/>
    <property type="match status" value="1"/>
</dbReference>
<dbReference type="PIRSF" id="PIRSF000525">
    <property type="entry name" value="SerC"/>
    <property type="match status" value="1"/>
</dbReference>
<dbReference type="SUPFAM" id="SSF53383">
    <property type="entry name" value="PLP-dependent transferases"/>
    <property type="match status" value="1"/>
</dbReference>
<dbReference type="PROSITE" id="PS00595">
    <property type="entry name" value="AA_TRANSFER_CLASS_5"/>
    <property type="match status" value="1"/>
</dbReference>
<reference key="1">
    <citation type="submission" date="2006-03" db="EMBL/GenBank/DDBJ databases">
        <title>Complete sequence of Shewanella denitrificans OS217.</title>
        <authorList>
            <consortium name="US DOE Joint Genome Institute"/>
            <person name="Copeland A."/>
            <person name="Lucas S."/>
            <person name="Lapidus A."/>
            <person name="Barry K."/>
            <person name="Detter J.C."/>
            <person name="Glavina del Rio T."/>
            <person name="Hammon N."/>
            <person name="Israni S."/>
            <person name="Dalin E."/>
            <person name="Tice H."/>
            <person name="Pitluck S."/>
            <person name="Brettin T."/>
            <person name="Bruce D."/>
            <person name="Han C."/>
            <person name="Tapia R."/>
            <person name="Gilna P."/>
            <person name="Kiss H."/>
            <person name="Schmutz J."/>
            <person name="Larimer F."/>
            <person name="Land M."/>
            <person name="Hauser L."/>
            <person name="Kyrpides N."/>
            <person name="Lykidis A."/>
            <person name="Richardson P."/>
        </authorList>
    </citation>
    <scope>NUCLEOTIDE SEQUENCE [LARGE SCALE GENOMIC DNA]</scope>
    <source>
        <strain>OS217 / ATCC BAA-1090 / DSM 15013</strain>
    </source>
</reference>
<evidence type="ECO:0000255" key="1">
    <source>
        <dbReference type="HAMAP-Rule" id="MF_00160"/>
    </source>
</evidence>
<protein>
    <recommendedName>
        <fullName evidence="1">Phosphoserine aminotransferase</fullName>
        <ecNumber evidence="1">2.6.1.52</ecNumber>
    </recommendedName>
    <alternativeName>
        <fullName evidence="1">Phosphohydroxythreonine aminotransferase</fullName>
        <shortName evidence="1">PSAT</shortName>
    </alternativeName>
</protein>
<feature type="chain" id="PRO_1000203566" description="Phosphoserine aminotransferase">
    <location>
        <begin position="1"/>
        <end position="363"/>
    </location>
</feature>
<feature type="binding site" evidence="1">
    <location>
        <position position="42"/>
    </location>
    <ligand>
        <name>L-glutamate</name>
        <dbReference type="ChEBI" id="CHEBI:29985"/>
    </ligand>
</feature>
<feature type="binding site" evidence="1">
    <location>
        <begin position="76"/>
        <end position="77"/>
    </location>
    <ligand>
        <name>pyridoxal 5'-phosphate</name>
        <dbReference type="ChEBI" id="CHEBI:597326"/>
    </ligand>
</feature>
<feature type="binding site" evidence="1">
    <location>
        <position position="102"/>
    </location>
    <ligand>
        <name>pyridoxal 5'-phosphate</name>
        <dbReference type="ChEBI" id="CHEBI:597326"/>
    </ligand>
</feature>
<feature type="binding site" evidence="1">
    <location>
        <position position="156"/>
    </location>
    <ligand>
        <name>pyridoxal 5'-phosphate</name>
        <dbReference type="ChEBI" id="CHEBI:597326"/>
    </ligand>
</feature>
<feature type="binding site" evidence="1">
    <location>
        <position position="175"/>
    </location>
    <ligand>
        <name>pyridoxal 5'-phosphate</name>
        <dbReference type="ChEBI" id="CHEBI:597326"/>
    </ligand>
</feature>
<feature type="binding site" evidence="1">
    <location>
        <position position="198"/>
    </location>
    <ligand>
        <name>pyridoxal 5'-phosphate</name>
        <dbReference type="ChEBI" id="CHEBI:597326"/>
    </ligand>
</feature>
<feature type="binding site" evidence="1">
    <location>
        <begin position="240"/>
        <end position="241"/>
    </location>
    <ligand>
        <name>pyridoxal 5'-phosphate</name>
        <dbReference type="ChEBI" id="CHEBI:597326"/>
    </ligand>
</feature>
<feature type="modified residue" description="N6-(pyridoxal phosphate)lysine" evidence="1">
    <location>
        <position position="199"/>
    </location>
</feature>
<comment type="function">
    <text evidence="1">Catalyzes the reversible conversion of 3-phosphohydroxypyruvate to phosphoserine and of 3-hydroxy-2-oxo-4-phosphonooxybutanoate to phosphohydroxythreonine.</text>
</comment>
<comment type="catalytic activity">
    <reaction evidence="1">
        <text>O-phospho-L-serine + 2-oxoglutarate = 3-phosphooxypyruvate + L-glutamate</text>
        <dbReference type="Rhea" id="RHEA:14329"/>
        <dbReference type="ChEBI" id="CHEBI:16810"/>
        <dbReference type="ChEBI" id="CHEBI:18110"/>
        <dbReference type="ChEBI" id="CHEBI:29985"/>
        <dbReference type="ChEBI" id="CHEBI:57524"/>
        <dbReference type="EC" id="2.6.1.52"/>
    </reaction>
</comment>
<comment type="catalytic activity">
    <reaction evidence="1">
        <text>4-(phosphooxy)-L-threonine + 2-oxoglutarate = (R)-3-hydroxy-2-oxo-4-phosphooxybutanoate + L-glutamate</text>
        <dbReference type="Rhea" id="RHEA:16573"/>
        <dbReference type="ChEBI" id="CHEBI:16810"/>
        <dbReference type="ChEBI" id="CHEBI:29985"/>
        <dbReference type="ChEBI" id="CHEBI:58452"/>
        <dbReference type="ChEBI" id="CHEBI:58538"/>
        <dbReference type="EC" id="2.6.1.52"/>
    </reaction>
</comment>
<comment type="cofactor">
    <cofactor evidence="1">
        <name>pyridoxal 5'-phosphate</name>
        <dbReference type="ChEBI" id="CHEBI:597326"/>
    </cofactor>
    <text evidence="1">Binds 1 pyridoxal phosphate per subunit.</text>
</comment>
<comment type="pathway">
    <text evidence="1">Amino-acid biosynthesis; L-serine biosynthesis; L-serine from 3-phospho-D-glycerate: step 2/3.</text>
</comment>
<comment type="pathway">
    <text evidence="1">Cofactor biosynthesis; pyridoxine 5'-phosphate biosynthesis; pyridoxine 5'-phosphate from D-erythrose 4-phosphate: step 3/5.</text>
</comment>
<comment type="subunit">
    <text evidence="1">Homodimer.</text>
</comment>
<comment type="subcellular location">
    <subcellularLocation>
        <location evidence="1">Cytoplasm</location>
    </subcellularLocation>
</comment>
<comment type="similarity">
    <text evidence="1">Belongs to the class-V pyridoxal-phosphate-dependent aminotransferase family. SerC subfamily.</text>
</comment>
<name>SERC_SHEDO</name>
<accession>Q12MU6</accession>
<keyword id="KW-0028">Amino-acid biosynthesis</keyword>
<keyword id="KW-0032">Aminotransferase</keyword>
<keyword id="KW-0963">Cytoplasm</keyword>
<keyword id="KW-0663">Pyridoxal phosphate</keyword>
<keyword id="KW-0664">Pyridoxine biosynthesis</keyword>
<keyword id="KW-1185">Reference proteome</keyword>
<keyword id="KW-0718">Serine biosynthesis</keyword>
<keyword id="KW-0808">Transferase</keyword>
<proteinExistence type="inferred from homology"/>